<name>RR19_ADICA</name>
<keyword id="KW-0150">Chloroplast</keyword>
<keyword id="KW-0934">Plastid</keyword>
<keyword id="KW-0687">Ribonucleoprotein</keyword>
<keyword id="KW-0689">Ribosomal protein</keyword>
<keyword id="KW-0691">RNA editing</keyword>
<keyword id="KW-0694">RNA-binding</keyword>
<keyword id="KW-0699">rRNA-binding</keyword>
<sequence>MARSSKRGPFVANHLIREIRNLNIQKKRKLITTWSRASAIVPIMIGHTIAVHNGREHLPIYVTDRMVGHKLGEFVPTRNFRGHAKSDKGSRR</sequence>
<dbReference type="EMBL" id="AY178864">
    <property type="protein sequence ID" value="AAP29431.2"/>
    <property type="molecule type" value="Genomic_DNA"/>
</dbReference>
<dbReference type="RefSeq" id="NP_848100.2">
    <property type="nucleotide sequence ID" value="NC_004766.1"/>
</dbReference>
<dbReference type="SMR" id="Q85FI2"/>
<dbReference type="GeneID" id="807429"/>
<dbReference type="GO" id="GO:0009507">
    <property type="term" value="C:chloroplast"/>
    <property type="evidence" value="ECO:0007669"/>
    <property type="project" value="UniProtKB-SubCell"/>
</dbReference>
<dbReference type="GO" id="GO:0005763">
    <property type="term" value="C:mitochondrial small ribosomal subunit"/>
    <property type="evidence" value="ECO:0007669"/>
    <property type="project" value="TreeGrafter"/>
</dbReference>
<dbReference type="GO" id="GO:0019843">
    <property type="term" value="F:rRNA binding"/>
    <property type="evidence" value="ECO:0007669"/>
    <property type="project" value="UniProtKB-UniRule"/>
</dbReference>
<dbReference type="GO" id="GO:0003735">
    <property type="term" value="F:structural constituent of ribosome"/>
    <property type="evidence" value="ECO:0007669"/>
    <property type="project" value="InterPro"/>
</dbReference>
<dbReference type="GO" id="GO:0000028">
    <property type="term" value="P:ribosomal small subunit assembly"/>
    <property type="evidence" value="ECO:0007669"/>
    <property type="project" value="TreeGrafter"/>
</dbReference>
<dbReference type="GO" id="GO:0006412">
    <property type="term" value="P:translation"/>
    <property type="evidence" value="ECO:0007669"/>
    <property type="project" value="UniProtKB-UniRule"/>
</dbReference>
<dbReference type="FunFam" id="3.30.860.10:FF:000001">
    <property type="entry name" value="30S ribosomal protein S19"/>
    <property type="match status" value="1"/>
</dbReference>
<dbReference type="Gene3D" id="3.30.860.10">
    <property type="entry name" value="30s Ribosomal Protein S19, Chain A"/>
    <property type="match status" value="1"/>
</dbReference>
<dbReference type="HAMAP" id="MF_00531">
    <property type="entry name" value="Ribosomal_uS19"/>
    <property type="match status" value="1"/>
</dbReference>
<dbReference type="InterPro" id="IPR002222">
    <property type="entry name" value="Ribosomal_uS19"/>
</dbReference>
<dbReference type="InterPro" id="IPR005732">
    <property type="entry name" value="Ribosomal_uS19_bac-type"/>
</dbReference>
<dbReference type="InterPro" id="IPR020934">
    <property type="entry name" value="Ribosomal_uS19_CS"/>
</dbReference>
<dbReference type="InterPro" id="IPR023575">
    <property type="entry name" value="Ribosomal_uS19_SF"/>
</dbReference>
<dbReference type="NCBIfam" id="TIGR01050">
    <property type="entry name" value="rpsS_bact"/>
    <property type="match status" value="1"/>
</dbReference>
<dbReference type="PANTHER" id="PTHR11880">
    <property type="entry name" value="RIBOSOMAL PROTEIN S19P FAMILY MEMBER"/>
    <property type="match status" value="1"/>
</dbReference>
<dbReference type="PANTHER" id="PTHR11880:SF8">
    <property type="entry name" value="SMALL RIBOSOMAL SUBUNIT PROTEIN US19M"/>
    <property type="match status" value="1"/>
</dbReference>
<dbReference type="Pfam" id="PF00203">
    <property type="entry name" value="Ribosomal_S19"/>
    <property type="match status" value="1"/>
</dbReference>
<dbReference type="PIRSF" id="PIRSF002144">
    <property type="entry name" value="Ribosomal_S19"/>
    <property type="match status" value="1"/>
</dbReference>
<dbReference type="PRINTS" id="PR00975">
    <property type="entry name" value="RIBOSOMALS19"/>
</dbReference>
<dbReference type="SUPFAM" id="SSF54570">
    <property type="entry name" value="Ribosomal protein S19"/>
    <property type="match status" value="1"/>
</dbReference>
<dbReference type="PROSITE" id="PS00323">
    <property type="entry name" value="RIBOSOMAL_S19"/>
    <property type="match status" value="1"/>
</dbReference>
<geneLocation type="chloroplast"/>
<accession>Q85FI2</accession>
<protein>
    <recommendedName>
        <fullName evidence="1">Small ribosomal subunit protein uS19c</fullName>
    </recommendedName>
    <alternativeName>
        <fullName evidence="3">30S ribosomal protein S19, chloroplastic</fullName>
    </alternativeName>
</protein>
<reference key="1">
    <citation type="journal article" date="2003" name="DNA Res.">
        <title>Complete nucleotide sequence of the chloroplast genome from a leptosporangiate fern, Adiantum capillus-veneris L.</title>
        <authorList>
            <person name="Wolf P.G."/>
            <person name="Rowe C.A."/>
            <person name="Sinclair R.B."/>
            <person name="Hasebe M."/>
        </authorList>
    </citation>
    <scope>NUCLEOTIDE SEQUENCE [LARGE SCALE GENOMIC DNA]</scope>
</reference>
<reference key="2">
    <citation type="journal article" date="2004" name="Gene">
        <title>High levels of RNA editing in a vascular plant chloroplast genome: analysis of transcripts from the fern Adiantum capillus-veneris.</title>
        <authorList>
            <person name="Wolf P.G."/>
            <person name="Rowe C.A."/>
            <person name="Hasebe M."/>
        </authorList>
    </citation>
    <scope>NUCLEOTIDE SEQUENCE [GENOMIC DNA]</scope>
    <scope>RNA EDITING</scope>
    <source>
        <tissue>Frond</tissue>
    </source>
</reference>
<comment type="function">
    <text evidence="1">Protein S19 forms a complex with S13 that binds strongly to the 16S ribosomal RNA.</text>
</comment>
<comment type="subcellular location">
    <subcellularLocation>
        <location>Plastid</location>
        <location>Chloroplast</location>
    </subcellularLocation>
</comment>
<comment type="RNA editing">
    <location>
        <position position="1" evidence="2"/>
    </location>
    <text>The initiator methionine is created by RNA editing.</text>
</comment>
<comment type="similarity">
    <text evidence="1">Belongs to the universal ribosomal protein uS19 family.</text>
</comment>
<proteinExistence type="evidence at transcript level"/>
<organism>
    <name type="scientific">Adiantum capillus-veneris</name>
    <name type="common">Maidenhair fern</name>
    <dbReference type="NCBI Taxonomy" id="13818"/>
    <lineage>
        <taxon>Eukaryota</taxon>
        <taxon>Viridiplantae</taxon>
        <taxon>Streptophyta</taxon>
        <taxon>Embryophyta</taxon>
        <taxon>Tracheophyta</taxon>
        <taxon>Polypodiopsida</taxon>
        <taxon>Polypodiidae</taxon>
        <taxon>Polypodiales</taxon>
        <taxon>Pteridineae</taxon>
        <taxon>Pteridaceae</taxon>
        <taxon>Vittarioideae</taxon>
        <taxon>Adiantum</taxon>
    </lineage>
</organism>
<evidence type="ECO:0000255" key="1">
    <source>
        <dbReference type="HAMAP-Rule" id="MF_00531"/>
    </source>
</evidence>
<evidence type="ECO:0000269" key="2">
    <source>
    </source>
</evidence>
<evidence type="ECO:0000305" key="3"/>
<gene>
    <name evidence="1" type="primary">rps19</name>
</gene>
<feature type="chain" id="PRO_0000129950" description="Small ribosomal subunit protein uS19c">
    <location>
        <begin position="1"/>
        <end position="92"/>
    </location>
</feature>